<accession>C5BSJ5</accession>
<feature type="chain" id="PRO_1000202393" description="Sulfate adenylyltransferase subunit 1">
    <location>
        <begin position="1"/>
        <end position="468"/>
    </location>
</feature>
<feature type="domain" description="tr-type G">
    <location>
        <begin position="22"/>
        <end position="239"/>
    </location>
</feature>
<feature type="region of interest" description="G1" evidence="1">
    <location>
        <begin position="31"/>
        <end position="38"/>
    </location>
</feature>
<feature type="region of interest" description="G2" evidence="1">
    <location>
        <begin position="89"/>
        <end position="93"/>
    </location>
</feature>
<feature type="region of interest" description="G3" evidence="1">
    <location>
        <begin position="110"/>
        <end position="113"/>
    </location>
</feature>
<feature type="region of interest" description="G4" evidence="1">
    <location>
        <begin position="165"/>
        <end position="168"/>
    </location>
</feature>
<feature type="region of interest" description="G5" evidence="1">
    <location>
        <begin position="202"/>
        <end position="204"/>
    </location>
</feature>
<feature type="binding site" evidence="2">
    <location>
        <begin position="31"/>
        <end position="38"/>
    </location>
    <ligand>
        <name>GTP</name>
        <dbReference type="ChEBI" id="CHEBI:37565"/>
    </ligand>
</feature>
<feature type="binding site" evidence="2">
    <location>
        <begin position="110"/>
        <end position="114"/>
    </location>
    <ligand>
        <name>GTP</name>
        <dbReference type="ChEBI" id="CHEBI:37565"/>
    </ligand>
</feature>
<feature type="binding site" evidence="2">
    <location>
        <begin position="165"/>
        <end position="168"/>
    </location>
    <ligand>
        <name>GTP</name>
        <dbReference type="ChEBI" id="CHEBI:37565"/>
    </ligand>
</feature>
<protein>
    <recommendedName>
        <fullName evidence="2">Sulfate adenylyltransferase subunit 1</fullName>
        <ecNumber evidence="2">2.7.7.4</ecNumber>
    </recommendedName>
    <alternativeName>
        <fullName evidence="2">ATP-sulfurylase large subunit</fullName>
    </alternativeName>
    <alternativeName>
        <fullName evidence="2">Sulfate adenylate transferase</fullName>
        <shortName evidence="2">SAT</shortName>
    </alternativeName>
</protein>
<comment type="function">
    <text evidence="2">With CysD forms the ATP sulfurylase (ATPS) that catalyzes the adenylation of sulfate producing adenosine 5'-phosphosulfate (APS) and diphosphate, the first enzymatic step in sulfur assimilation pathway. APS synthesis involves the formation of a high-energy phosphoric-sulfuric acid anhydride bond driven by GTP hydrolysis by CysN coupled to ATP hydrolysis by CysD.</text>
</comment>
<comment type="catalytic activity">
    <reaction evidence="2">
        <text>sulfate + ATP + H(+) = adenosine 5'-phosphosulfate + diphosphate</text>
        <dbReference type="Rhea" id="RHEA:18133"/>
        <dbReference type="ChEBI" id="CHEBI:15378"/>
        <dbReference type="ChEBI" id="CHEBI:16189"/>
        <dbReference type="ChEBI" id="CHEBI:30616"/>
        <dbReference type="ChEBI" id="CHEBI:33019"/>
        <dbReference type="ChEBI" id="CHEBI:58243"/>
        <dbReference type="EC" id="2.7.7.4"/>
    </reaction>
</comment>
<comment type="pathway">
    <text evidence="2">Sulfur metabolism; hydrogen sulfide biosynthesis; sulfite from sulfate: step 1/3.</text>
</comment>
<comment type="subunit">
    <text evidence="2">Heterodimer composed of CysD, the smaller subunit, and CysN.</text>
</comment>
<comment type="similarity">
    <text evidence="2">Belongs to the TRAFAC class translation factor GTPase superfamily. Classic translation factor GTPase family. CysN/NodQ subfamily.</text>
</comment>
<keyword id="KW-0067">ATP-binding</keyword>
<keyword id="KW-0342">GTP-binding</keyword>
<keyword id="KW-0547">Nucleotide-binding</keyword>
<keyword id="KW-0548">Nucleotidyltransferase</keyword>
<keyword id="KW-1185">Reference proteome</keyword>
<keyword id="KW-0808">Transferase</keyword>
<organism>
    <name type="scientific">Teredinibacter turnerae (strain ATCC 39867 / T7901)</name>
    <dbReference type="NCBI Taxonomy" id="377629"/>
    <lineage>
        <taxon>Bacteria</taxon>
        <taxon>Pseudomonadati</taxon>
        <taxon>Pseudomonadota</taxon>
        <taxon>Gammaproteobacteria</taxon>
        <taxon>Cellvibrionales</taxon>
        <taxon>Cellvibrionaceae</taxon>
        <taxon>Teredinibacter</taxon>
    </lineage>
</organism>
<name>CYSN_TERTT</name>
<gene>
    <name evidence="2" type="primary">cysN</name>
    <name type="ordered locus">TERTU_1387</name>
</gene>
<proteinExistence type="inferred from homology"/>
<dbReference type="EC" id="2.7.7.4" evidence="2"/>
<dbReference type="EMBL" id="CP001614">
    <property type="protein sequence ID" value="ACR12133.1"/>
    <property type="molecule type" value="Genomic_DNA"/>
</dbReference>
<dbReference type="RefSeq" id="WP_015818245.1">
    <property type="nucleotide sequence ID" value="NC_012997.1"/>
</dbReference>
<dbReference type="SMR" id="C5BSJ5"/>
<dbReference type="STRING" id="377629.TERTU_1387"/>
<dbReference type="KEGG" id="ttu:TERTU_1387"/>
<dbReference type="eggNOG" id="COG2895">
    <property type="taxonomic scope" value="Bacteria"/>
</dbReference>
<dbReference type="HOGENOM" id="CLU_007265_5_2_6"/>
<dbReference type="OrthoDB" id="9804504at2"/>
<dbReference type="UniPathway" id="UPA00140">
    <property type="reaction ID" value="UER00204"/>
</dbReference>
<dbReference type="Proteomes" id="UP000009080">
    <property type="component" value="Chromosome"/>
</dbReference>
<dbReference type="GO" id="GO:0005524">
    <property type="term" value="F:ATP binding"/>
    <property type="evidence" value="ECO:0007669"/>
    <property type="project" value="UniProtKB-KW"/>
</dbReference>
<dbReference type="GO" id="GO:0005525">
    <property type="term" value="F:GTP binding"/>
    <property type="evidence" value="ECO:0007669"/>
    <property type="project" value="UniProtKB-UniRule"/>
</dbReference>
<dbReference type="GO" id="GO:0003924">
    <property type="term" value="F:GTPase activity"/>
    <property type="evidence" value="ECO:0007669"/>
    <property type="project" value="InterPro"/>
</dbReference>
<dbReference type="GO" id="GO:0097216">
    <property type="term" value="F:guanosine tetraphosphate binding"/>
    <property type="evidence" value="ECO:0007669"/>
    <property type="project" value="UniProtKB-ARBA"/>
</dbReference>
<dbReference type="GO" id="GO:0004781">
    <property type="term" value="F:sulfate adenylyltransferase (ATP) activity"/>
    <property type="evidence" value="ECO:0007669"/>
    <property type="project" value="UniProtKB-UniRule"/>
</dbReference>
<dbReference type="GO" id="GO:0070814">
    <property type="term" value="P:hydrogen sulfide biosynthetic process"/>
    <property type="evidence" value="ECO:0007669"/>
    <property type="project" value="UniProtKB-UniRule"/>
</dbReference>
<dbReference type="GO" id="GO:0000103">
    <property type="term" value="P:sulfate assimilation"/>
    <property type="evidence" value="ECO:0007669"/>
    <property type="project" value="UniProtKB-UniRule"/>
</dbReference>
<dbReference type="CDD" id="cd04166">
    <property type="entry name" value="CysN_ATPS"/>
    <property type="match status" value="1"/>
</dbReference>
<dbReference type="CDD" id="cd03695">
    <property type="entry name" value="CysN_NodQ_II"/>
    <property type="match status" value="1"/>
</dbReference>
<dbReference type="CDD" id="cd04095">
    <property type="entry name" value="CysN_NoDQ_III"/>
    <property type="match status" value="1"/>
</dbReference>
<dbReference type="FunFam" id="2.40.30.10:FF:000027">
    <property type="entry name" value="Sulfate adenylyltransferase subunit 1"/>
    <property type="match status" value="1"/>
</dbReference>
<dbReference type="FunFam" id="3.40.50.300:FF:000119">
    <property type="entry name" value="Sulfate adenylyltransferase subunit 1"/>
    <property type="match status" value="1"/>
</dbReference>
<dbReference type="Gene3D" id="3.40.50.300">
    <property type="entry name" value="P-loop containing nucleotide triphosphate hydrolases"/>
    <property type="match status" value="1"/>
</dbReference>
<dbReference type="Gene3D" id="2.40.30.10">
    <property type="entry name" value="Translation factors"/>
    <property type="match status" value="2"/>
</dbReference>
<dbReference type="HAMAP" id="MF_00062">
    <property type="entry name" value="Sulf_adenylyltr_sub1"/>
    <property type="match status" value="1"/>
</dbReference>
<dbReference type="InterPro" id="IPR041757">
    <property type="entry name" value="CysN_GTP-bd"/>
</dbReference>
<dbReference type="InterPro" id="IPR044138">
    <property type="entry name" value="CysN_II"/>
</dbReference>
<dbReference type="InterPro" id="IPR044139">
    <property type="entry name" value="CysN_NoDQ_III"/>
</dbReference>
<dbReference type="InterPro" id="IPR004161">
    <property type="entry name" value="EFTu-like_2"/>
</dbReference>
<dbReference type="InterPro" id="IPR031157">
    <property type="entry name" value="G_TR_CS"/>
</dbReference>
<dbReference type="InterPro" id="IPR054696">
    <property type="entry name" value="GTP-eEF1A_C"/>
</dbReference>
<dbReference type="InterPro" id="IPR027417">
    <property type="entry name" value="P-loop_NTPase"/>
</dbReference>
<dbReference type="InterPro" id="IPR005225">
    <property type="entry name" value="Small_GTP-bd"/>
</dbReference>
<dbReference type="InterPro" id="IPR011779">
    <property type="entry name" value="SO4_adenylTrfase_lsu"/>
</dbReference>
<dbReference type="InterPro" id="IPR000795">
    <property type="entry name" value="T_Tr_GTP-bd_dom"/>
</dbReference>
<dbReference type="InterPro" id="IPR050100">
    <property type="entry name" value="TRAFAC_GTPase_members"/>
</dbReference>
<dbReference type="InterPro" id="IPR009000">
    <property type="entry name" value="Transl_B-barrel_sf"/>
</dbReference>
<dbReference type="InterPro" id="IPR009001">
    <property type="entry name" value="Transl_elong_EF1A/Init_IF2_C"/>
</dbReference>
<dbReference type="NCBIfam" id="TIGR02034">
    <property type="entry name" value="CysN"/>
    <property type="match status" value="1"/>
</dbReference>
<dbReference type="NCBIfam" id="NF003478">
    <property type="entry name" value="PRK05124.1"/>
    <property type="match status" value="1"/>
</dbReference>
<dbReference type="NCBIfam" id="NF004035">
    <property type="entry name" value="PRK05506.1"/>
    <property type="match status" value="1"/>
</dbReference>
<dbReference type="NCBIfam" id="TIGR00231">
    <property type="entry name" value="small_GTP"/>
    <property type="match status" value="1"/>
</dbReference>
<dbReference type="PANTHER" id="PTHR23115">
    <property type="entry name" value="TRANSLATION FACTOR"/>
    <property type="match status" value="1"/>
</dbReference>
<dbReference type="Pfam" id="PF22594">
    <property type="entry name" value="GTP-eEF1A_C"/>
    <property type="match status" value="1"/>
</dbReference>
<dbReference type="Pfam" id="PF00009">
    <property type="entry name" value="GTP_EFTU"/>
    <property type="match status" value="1"/>
</dbReference>
<dbReference type="Pfam" id="PF03144">
    <property type="entry name" value="GTP_EFTU_D2"/>
    <property type="match status" value="1"/>
</dbReference>
<dbReference type="PRINTS" id="PR00315">
    <property type="entry name" value="ELONGATNFCT"/>
</dbReference>
<dbReference type="SUPFAM" id="SSF50465">
    <property type="entry name" value="EF-Tu/eEF-1alpha/eIF2-gamma C-terminal domain"/>
    <property type="match status" value="1"/>
</dbReference>
<dbReference type="SUPFAM" id="SSF52540">
    <property type="entry name" value="P-loop containing nucleoside triphosphate hydrolases"/>
    <property type="match status" value="1"/>
</dbReference>
<dbReference type="SUPFAM" id="SSF50447">
    <property type="entry name" value="Translation proteins"/>
    <property type="match status" value="1"/>
</dbReference>
<dbReference type="PROSITE" id="PS00301">
    <property type="entry name" value="G_TR_1"/>
    <property type="match status" value="1"/>
</dbReference>
<dbReference type="PROSITE" id="PS51722">
    <property type="entry name" value="G_TR_2"/>
    <property type="match status" value="1"/>
</dbReference>
<sequence length="468" mass="51743">MSHQSELIETDIDAYLAQHERKELLRFLTCGSVDDGKSTLIGRLLHDSKMIYEDQLAAVASDTTKHGTTGEKIDLALLVDGLQAEREQGITIDVAYRYFSTAKRKFIIADTPGHEQYTRNMATGASTCDLAVILIDARYGVQTQTRRHSYIASLLGIKHVVVAINKMDLVEFSESRFEEIKQSYLDLSKSLNPAELHFVPMSALDGDNVVNISERTPWYSGKSLMQILETVEIASDKNADDFRFPVQFVNRPNLNFRGFCGTVASGVVKVGDKVKALPSGKTSTVKSIVTFDGELDEAFVGQAVTLTLADEIDISRGDMVVLADSEQTLSNRLRAHLVWMSEAELKPGKQYLFKFASKVTPGVVADIEYRVDVNTFEKSEESAMQLNDIAVVDVQLEQEVVVDAYQKNRATGAFIVIDRLTNITVGAGMAIEALASAAATKGDYSEFEVELNALVRKHFPHWDAKKIG</sequence>
<reference key="1">
    <citation type="journal article" date="2009" name="PLoS ONE">
        <title>The complete genome of Teredinibacter turnerae T7901: an intracellular endosymbiont of marine wood-boring bivalves (shipworms).</title>
        <authorList>
            <person name="Yang J.C."/>
            <person name="Madupu R."/>
            <person name="Durkin A.S."/>
            <person name="Ekborg N.A."/>
            <person name="Pedamallu C.S."/>
            <person name="Hostetler J.B."/>
            <person name="Radune D."/>
            <person name="Toms B.S."/>
            <person name="Henrissat B."/>
            <person name="Coutinho P.M."/>
            <person name="Schwarz S."/>
            <person name="Field L."/>
            <person name="Trindade-Silva A.E."/>
            <person name="Soares C.A.G."/>
            <person name="Elshahawi S."/>
            <person name="Hanora A."/>
            <person name="Schmidt E.W."/>
            <person name="Haygood M.G."/>
            <person name="Posfai J."/>
            <person name="Benner J."/>
            <person name="Madinger C."/>
            <person name="Nove J."/>
            <person name="Anton B."/>
            <person name="Chaudhary K."/>
            <person name="Foster J."/>
            <person name="Holman A."/>
            <person name="Kumar S."/>
            <person name="Lessard P.A."/>
            <person name="Luyten Y.A."/>
            <person name="Slatko B."/>
            <person name="Wood N."/>
            <person name="Wu B."/>
            <person name="Teplitski M."/>
            <person name="Mougous J.D."/>
            <person name="Ward N."/>
            <person name="Eisen J.A."/>
            <person name="Badger J.H."/>
            <person name="Distel D.L."/>
        </authorList>
    </citation>
    <scope>NUCLEOTIDE SEQUENCE [LARGE SCALE GENOMIC DNA]</scope>
    <source>
        <strain>ATCC 39867 / T7901</strain>
    </source>
</reference>
<evidence type="ECO:0000250" key="1"/>
<evidence type="ECO:0000255" key="2">
    <source>
        <dbReference type="HAMAP-Rule" id="MF_00062"/>
    </source>
</evidence>